<comment type="function">
    <text evidence="1">Chaperone involved in the maturation of iron-sulfur cluster-containing proteins. Has a low intrinsic ATPase activity which is markedly stimulated by HscB. Involved in the maturation of IscU.</text>
</comment>
<comment type="similarity">
    <text evidence="1">Belongs to the heat shock protein 70 family.</text>
</comment>
<protein>
    <recommendedName>
        <fullName evidence="1">Chaperone protein HscA</fullName>
    </recommendedName>
    <alternativeName>
        <fullName evidence="1">Hsc66</fullName>
    </alternativeName>
</protein>
<gene>
    <name evidence="1" type="primary">hscA</name>
    <name type="ordered locus">BWG_2290</name>
</gene>
<reference key="1">
    <citation type="journal article" date="2009" name="J. Bacteriol.">
        <title>Genomic sequencing reveals regulatory mutations and recombinational events in the widely used MC4100 lineage of Escherichia coli K-12.</title>
        <authorList>
            <person name="Ferenci T."/>
            <person name="Zhou Z."/>
            <person name="Betteridge T."/>
            <person name="Ren Y."/>
            <person name="Liu Y."/>
            <person name="Feng L."/>
            <person name="Reeves P.R."/>
            <person name="Wang L."/>
        </authorList>
    </citation>
    <scope>NUCLEOTIDE SEQUENCE [LARGE SCALE GENOMIC DNA]</scope>
    <source>
        <strain>K12 / MC4100 / BW2952</strain>
    </source>
</reference>
<sequence length="616" mass="65652">MALLQISEPGLSAAPHQRRLAAGIDLGTTNSLVATVRSGQAETLADHEGRHLLPSVVHYQQQGHSVGYDARTNAALDTANTISSVKRLMGRSLADIQQRYPHLPYQFQASENGLPMIETAAGLLNPVRVSADILKALAARATEALAGELDGVVITVPAYFDDAQRQGTKDAARLAGLHVLRLLNEPTAAAIAYGLDSGQEGVIAVYDLGGGTFDISILRLSRGVFEVLATGGDSALGGDDFDHLLADYIREQAGIPDRSDNRVQRELLDAAIAAKIALSDADSVTVNVAGWQGEISREQFNELIAPLVKRTLLACRRALKDAGVEADEVLEVVMVGGSTRVPLVRERVGEFFGRPPLTSIDPDKVVAIGAAIQADILVGNKPDSEMLLLDVIPLSLGLETMGGLVEKVIPRNTTIPVARAQDFTTFKDGQTAMSIHVMQGERELVQDCRSLARFALRGIPALPAGGAHIRVTFQVDADGLLSVTAMEKSTGVEASIQVKPSYGLTDSEIASMIKDSMSYAEQDVKARMLAEQKVEAARVLESLHGALAADAALLSAAERQVIDDAAAHLSEVAQGDDVDAIEQAIKNVDKQTQDFAARRMDQSVRRALKGHSVDEV</sequence>
<name>HSCA_ECOBW</name>
<evidence type="ECO:0000255" key="1">
    <source>
        <dbReference type="HAMAP-Rule" id="MF_00679"/>
    </source>
</evidence>
<accession>C4ZXA1</accession>
<keyword id="KW-0067">ATP-binding</keyword>
<keyword id="KW-0143">Chaperone</keyword>
<keyword id="KW-0547">Nucleotide-binding</keyword>
<organism>
    <name type="scientific">Escherichia coli (strain K12 / MC4100 / BW2952)</name>
    <dbReference type="NCBI Taxonomy" id="595496"/>
    <lineage>
        <taxon>Bacteria</taxon>
        <taxon>Pseudomonadati</taxon>
        <taxon>Pseudomonadota</taxon>
        <taxon>Gammaproteobacteria</taxon>
        <taxon>Enterobacterales</taxon>
        <taxon>Enterobacteriaceae</taxon>
        <taxon>Escherichia</taxon>
    </lineage>
</organism>
<feature type="chain" id="PRO_1000212528" description="Chaperone protein HscA">
    <location>
        <begin position="1"/>
        <end position="616"/>
    </location>
</feature>
<proteinExistence type="inferred from homology"/>
<dbReference type="EMBL" id="CP001396">
    <property type="protein sequence ID" value="ACR62999.1"/>
    <property type="molecule type" value="Genomic_DNA"/>
</dbReference>
<dbReference type="RefSeq" id="WP_001196613.1">
    <property type="nucleotide sequence ID" value="NC_012759.1"/>
</dbReference>
<dbReference type="SMR" id="C4ZXA1"/>
<dbReference type="GeneID" id="93774610"/>
<dbReference type="KEGG" id="ebw:BWG_2290"/>
<dbReference type="HOGENOM" id="CLU_005965_2_1_6"/>
<dbReference type="GO" id="GO:0005524">
    <property type="term" value="F:ATP binding"/>
    <property type="evidence" value="ECO:0007669"/>
    <property type="project" value="UniProtKB-KW"/>
</dbReference>
<dbReference type="GO" id="GO:0016887">
    <property type="term" value="F:ATP hydrolysis activity"/>
    <property type="evidence" value="ECO:0007669"/>
    <property type="project" value="UniProtKB-UniRule"/>
</dbReference>
<dbReference type="GO" id="GO:0140662">
    <property type="term" value="F:ATP-dependent protein folding chaperone"/>
    <property type="evidence" value="ECO:0007669"/>
    <property type="project" value="InterPro"/>
</dbReference>
<dbReference type="GO" id="GO:0051082">
    <property type="term" value="F:unfolded protein binding"/>
    <property type="evidence" value="ECO:0007669"/>
    <property type="project" value="InterPro"/>
</dbReference>
<dbReference type="GO" id="GO:0016226">
    <property type="term" value="P:iron-sulfur cluster assembly"/>
    <property type="evidence" value="ECO:0007669"/>
    <property type="project" value="InterPro"/>
</dbReference>
<dbReference type="CDD" id="cd10236">
    <property type="entry name" value="ASKHA_NBD_HSP70_HscA"/>
    <property type="match status" value="1"/>
</dbReference>
<dbReference type="FunFam" id="1.20.1270.10:FF:000006">
    <property type="entry name" value="Chaperone protein HscA"/>
    <property type="match status" value="1"/>
</dbReference>
<dbReference type="FunFam" id="3.30.420.40:FF:000046">
    <property type="entry name" value="Chaperone protein HscA"/>
    <property type="match status" value="1"/>
</dbReference>
<dbReference type="FunFam" id="3.90.640.10:FF:000013">
    <property type="entry name" value="Chaperone protein HscA"/>
    <property type="match status" value="1"/>
</dbReference>
<dbReference type="FunFam" id="2.60.34.10:FF:000005">
    <property type="entry name" value="Chaperone protein HscA homolog"/>
    <property type="match status" value="1"/>
</dbReference>
<dbReference type="FunFam" id="3.30.420.40:FF:000020">
    <property type="entry name" value="Chaperone protein HscA homolog"/>
    <property type="match status" value="1"/>
</dbReference>
<dbReference type="Gene3D" id="1.20.1270.10">
    <property type="match status" value="1"/>
</dbReference>
<dbReference type="Gene3D" id="3.30.420.40">
    <property type="match status" value="2"/>
</dbReference>
<dbReference type="Gene3D" id="3.90.640.10">
    <property type="entry name" value="Actin, Chain A, domain 4"/>
    <property type="match status" value="1"/>
</dbReference>
<dbReference type="Gene3D" id="2.60.34.10">
    <property type="entry name" value="Substrate Binding Domain Of DNAk, Chain A, domain 1"/>
    <property type="match status" value="1"/>
</dbReference>
<dbReference type="HAMAP" id="MF_00679">
    <property type="entry name" value="HscA"/>
    <property type="match status" value="1"/>
</dbReference>
<dbReference type="InterPro" id="IPR043129">
    <property type="entry name" value="ATPase_NBD"/>
</dbReference>
<dbReference type="InterPro" id="IPR018181">
    <property type="entry name" value="Heat_shock_70_CS"/>
</dbReference>
<dbReference type="InterPro" id="IPR042039">
    <property type="entry name" value="HscA_NBD"/>
</dbReference>
<dbReference type="InterPro" id="IPR029048">
    <property type="entry name" value="HSP70_C_sf"/>
</dbReference>
<dbReference type="InterPro" id="IPR029047">
    <property type="entry name" value="HSP70_peptide-bd_sf"/>
</dbReference>
<dbReference type="InterPro" id="IPR013126">
    <property type="entry name" value="Hsp_70_fam"/>
</dbReference>
<dbReference type="InterPro" id="IPR010236">
    <property type="entry name" value="ISC_FeS_clus_asmbl_HscA"/>
</dbReference>
<dbReference type="NCBIfam" id="TIGR01991">
    <property type="entry name" value="HscA"/>
    <property type="match status" value="1"/>
</dbReference>
<dbReference type="NCBIfam" id="NF003520">
    <property type="entry name" value="PRK05183.1"/>
    <property type="match status" value="1"/>
</dbReference>
<dbReference type="PANTHER" id="PTHR19375">
    <property type="entry name" value="HEAT SHOCK PROTEIN 70KDA"/>
    <property type="match status" value="1"/>
</dbReference>
<dbReference type="Pfam" id="PF00012">
    <property type="entry name" value="HSP70"/>
    <property type="match status" value="1"/>
</dbReference>
<dbReference type="PRINTS" id="PR00301">
    <property type="entry name" value="HEATSHOCK70"/>
</dbReference>
<dbReference type="SUPFAM" id="SSF53067">
    <property type="entry name" value="Actin-like ATPase domain"/>
    <property type="match status" value="2"/>
</dbReference>
<dbReference type="SUPFAM" id="SSF100934">
    <property type="entry name" value="Heat shock protein 70kD (HSP70), C-terminal subdomain"/>
    <property type="match status" value="1"/>
</dbReference>
<dbReference type="SUPFAM" id="SSF100920">
    <property type="entry name" value="Heat shock protein 70kD (HSP70), peptide-binding domain"/>
    <property type="match status" value="1"/>
</dbReference>
<dbReference type="PROSITE" id="PS00297">
    <property type="entry name" value="HSP70_1"/>
    <property type="match status" value="1"/>
</dbReference>
<dbReference type="PROSITE" id="PS00329">
    <property type="entry name" value="HSP70_2"/>
    <property type="match status" value="1"/>
</dbReference>
<dbReference type="PROSITE" id="PS01036">
    <property type="entry name" value="HSP70_3"/>
    <property type="match status" value="1"/>
</dbReference>